<name>UREE_PSYIN</name>
<organism>
    <name type="scientific">Psychromonas ingrahamii (strain DSM 17664 / CCUG 51855 / 37)</name>
    <dbReference type="NCBI Taxonomy" id="357804"/>
    <lineage>
        <taxon>Bacteria</taxon>
        <taxon>Pseudomonadati</taxon>
        <taxon>Pseudomonadota</taxon>
        <taxon>Gammaproteobacteria</taxon>
        <taxon>Alteromonadales</taxon>
        <taxon>Psychromonadaceae</taxon>
        <taxon>Psychromonas</taxon>
    </lineage>
</organism>
<feature type="chain" id="PRO_1000083908" description="Urease accessory protein UreE">
    <location>
        <begin position="1"/>
        <end position="152"/>
    </location>
</feature>
<proteinExistence type="inferred from homology"/>
<comment type="function">
    <text evidence="1">Involved in urease metallocenter assembly. Binds nickel. Probably functions as a nickel donor during metallocenter assembly.</text>
</comment>
<comment type="subcellular location">
    <subcellularLocation>
        <location evidence="1">Cytoplasm</location>
    </subcellularLocation>
</comment>
<comment type="similarity">
    <text evidence="1">Belongs to the UreE family.</text>
</comment>
<accession>A1SYY2</accession>
<keyword id="KW-0143">Chaperone</keyword>
<keyword id="KW-0963">Cytoplasm</keyword>
<keyword id="KW-0533">Nickel</keyword>
<keyword id="KW-0996">Nickel insertion</keyword>
<keyword id="KW-1185">Reference proteome</keyword>
<sequence length="152" mass="16996">MLQVFERLDHTHDEISDSITLDQDTRKKSRIKSVTDKGANIGIFVERGHPLLVGEILKTECGLLIEVKGKAEDVSTAVANDWLNFSKVCYHLGNRHTTLQIGELWVRFKPDHVLEQLAENYGLSVNSIPAVFEPENGAYGVRSHGHSHAHDS</sequence>
<protein>
    <recommendedName>
        <fullName evidence="1">Urease accessory protein UreE</fullName>
    </recommendedName>
</protein>
<reference key="1">
    <citation type="journal article" date="2008" name="BMC Genomics">
        <title>Genomics of an extreme psychrophile, Psychromonas ingrahamii.</title>
        <authorList>
            <person name="Riley M."/>
            <person name="Staley J.T."/>
            <person name="Danchin A."/>
            <person name="Wang T.Z."/>
            <person name="Brettin T.S."/>
            <person name="Hauser L.J."/>
            <person name="Land M.L."/>
            <person name="Thompson L.S."/>
        </authorList>
    </citation>
    <scope>NUCLEOTIDE SEQUENCE [LARGE SCALE GENOMIC DNA]</scope>
    <source>
        <strain>DSM 17664 / CCUG 51855 / 37</strain>
    </source>
</reference>
<dbReference type="EMBL" id="CP000510">
    <property type="protein sequence ID" value="ABM04697.1"/>
    <property type="molecule type" value="Genomic_DNA"/>
</dbReference>
<dbReference type="RefSeq" id="WP_011771251.1">
    <property type="nucleotide sequence ID" value="NC_008709.1"/>
</dbReference>
<dbReference type="SMR" id="A1SYY2"/>
<dbReference type="STRING" id="357804.Ping_2995"/>
<dbReference type="KEGG" id="pin:Ping_2995"/>
<dbReference type="eggNOG" id="COG2371">
    <property type="taxonomic scope" value="Bacteria"/>
</dbReference>
<dbReference type="HOGENOM" id="CLU_093757_2_0_6"/>
<dbReference type="OrthoDB" id="5421304at2"/>
<dbReference type="Proteomes" id="UP000000639">
    <property type="component" value="Chromosome"/>
</dbReference>
<dbReference type="GO" id="GO:0005737">
    <property type="term" value="C:cytoplasm"/>
    <property type="evidence" value="ECO:0007669"/>
    <property type="project" value="UniProtKB-SubCell"/>
</dbReference>
<dbReference type="GO" id="GO:0016151">
    <property type="term" value="F:nickel cation binding"/>
    <property type="evidence" value="ECO:0007669"/>
    <property type="project" value="UniProtKB-UniRule"/>
</dbReference>
<dbReference type="GO" id="GO:0051082">
    <property type="term" value="F:unfolded protein binding"/>
    <property type="evidence" value="ECO:0007669"/>
    <property type="project" value="UniProtKB-UniRule"/>
</dbReference>
<dbReference type="GO" id="GO:0006457">
    <property type="term" value="P:protein folding"/>
    <property type="evidence" value="ECO:0007669"/>
    <property type="project" value="InterPro"/>
</dbReference>
<dbReference type="GO" id="GO:0065003">
    <property type="term" value="P:protein-containing complex assembly"/>
    <property type="evidence" value="ECO:0007669"/>
    <property type="project" value="InterPro"/>
</dbReference>
<dbReference type="GO" id="GO:0019627">
    <property type="term" value="P:urea metabolic process"/>
    <property type="evidence" value="ECO:0007669"/>
    <property type="project" value="InterPro"/>
</dbReference>
<dbReference type="Gene3D" id="2.60.260.20">
    <property type="entry name" value="Urease metallochaperone UreE, N-terminal domain"/>
    <property type="match status" value="1"/>
</dbReference>
<dbReference type="Gene3D" id="3.30.70.790">
    <property type="entry name" value="UreE, C-terminal domain"/>
    <property type="match status" value="1"/>
</dbReference>
<dbReference type="HAMAP" id="MF_00822">
    <property type="entry name" value="UreE"/>
    <property type="match status" value="1"/>
</dbReference>
<dbReference type="InterPro" id="IPR012406">
    <property type="entry name" value="UreE"/>
</dbReference>
<dbReference type="InterPro" id="IPR007864">
    <property type="entry name" value="UreE_C_dom"/>
</dbReference>
<dbReference type="InterPro" id="IPR004029">
    <property type="entry name" value="UreE_N"/>
</dbReference>
<dbReference type="InterPro" id="IPR036118">
    <property type="entry name" value="UreE_N_sf"/>
</dbReference>
<dbReference type="NCBIfam" id="NF009751">
    <property type="entry name" value="PRK13261.1-1"/>
    <property type="match status" value="1"/>
</dbReference>
<dbReference type="NCBIfam" id="NF010711">
    <property type="entry name" value="PRK14113.1"/>
    <property type="match status" value="1"/>
</dbReference>
<dbReference type="Pfam" id="PF05194">
    <property type="entry name" value="UreE_C"/>
    <property type="match status" value="1"/>
</dbReference>
<dbReference type="Pfam" id="PF02814">
    <property type="entry name" value="UreE_N"/>
    <property type="match status" value="1"/>
</dbReference>
<dbReference type="PIRSF" id="PIRSF036402">
    <property type="entry name" value="Ureas_acces_UreE"/>
    <property type="match status" value="1"/>
</dbReference>
<dbReference type="SMART" id="SM00988">
    <property type="entry name" value="UreE_N"/>
    <property type="match status" value="1"/>
</dbReference>
<dbReference type="SUPFAM" id="SSF69737">
    <property type="entry name" value="Urease metallochaperone UreE, C-terminal domain"/>
    <property type="match status" value="1"/>
</dbReference>
<dbReference type="SUPFAM" id="SSF69287">
    <property type="entry name" value="Urease metallochaperone UreE, N-terminal domain"/>
    <property type="match status" value="1"/>
</dbReference>
<evidence type="ECO:0000255" key="1">
    <source>
        <dbReference type="HAMAP-Rule" id="MF_00822"/>
    </source>
</evidence>
<gene>
    <name evidence="1" type="primary">ureE</name>
    <name type="ordered locus">Ping_2995</name>
</gene>